<feature type="chain" id="PRO_0000052759" description="Hemoglobin subunit alpha-4">
    <location>
        <begin position="1"/>
        <end position="142"/>
    </location>
</feature>
<feature type="domain" description="Globin" evidence="1">
    <location>
        <begin position="1"/>
        <end position="142"/>
    </location>
</feature>
<feature type="binding site" evidence="1">
    <location>
        <position position="59"/>
    </location>
    <ligand>
        <name>O2</name>
        <dbReference type="ChEBI" id="CHEBI:15379"/>
    </ligand>
</feature>
<feature type="binding site" description="proximal binding residue" evidence="1">
    <location>
        <position position="88"/>
    </location>
    <ligand>
        <name>heme b</name>
        <dbReference type="ChEBI" id="CHEBI:60344"/>
    </ligand>
    <ligandPart>
        <name>Fe</name>
        <dbReference type="ChEBI" id="CHEBI:18248"/>
    </ligandPart>
</feature>
<feature type="modified residue" description="N-acetylserine" evidence="2">
    <location>
        <position position="1"/>
    </location>
</feature>
<feature type="helix" evidence="3">
    <location>
        <begin position="4"/>
        <end position="17"/>
    </location>
</feature>
<feature type="helix" evidence="3">
    <location>
        <begin position="18"/>
        <end position="20"/>
    </location>
</feature>
<feature type="helix" evidence="3">
    <location>
        <begin position="21"/>
        <end position="35"/>
    </location>
</feature>
<feature type="helix" evidence="3">
    <location>
        <begin position="37"/>
        <end position="42"/>
    </location>
</feature>
<feature type="helix" evidence="3">
    <location>
        <begin position="54"/>
        <end position="71"/>
    </location>
</feature>
<feature type="turn" evidence="3">
    <location>
        <begin position="72"/>
        <end position="75"/>
    </location>
</feature>
<feature type="helix" evidence="3">
    <location>
        <begin position="77"/>
        <end position="90"/>
    </location>
</feature>
<feature type="helix" evidence="3">
    <location>
        <begin position="98"/>
        <end position="113"/>
    </location>
</feature>
<feature type="turn" evidence="3">
    <location>
        <begin position="115"/>
        <end position="117"/>
    </location>
</feature>
<feature type="helix" evidence="3">
    <location>
        <begin position="120"/>
        <end position="138"/>
    </location>
</feature>
<comment type="function">
    <text>Involved in oxygen transport from gills to the various peripheral tissues.</text>
</comment>
<comment type="subunit">
    <text>Heterotetramer of two alpha chains and two beta chains.</text>
</comment>
<comment type="tissue specificity">
    <text>Red blood cells.</text>
</comment>
<comment type="similarity">
    <text evidence="1">Belongs to the globin family.</text>
</comment>
<name>HBA4_ONCMY</name>
<sequence length="142" mass="15803">SLSAKDKANVKAIWGKILPKSDEIGEQALSRMLVVYPQTKAYFSHWASVAPGSAPVKKHGITIMNQIDDCVGHMDDLFGFLTKLSELHATKLRVDPTNFKILAHNLIVVIAAYFPAEFTPEIHLSVDKFLQQLALALAEKYR</sequence>
<protein>
    <recommendedName>
        <fullName>Hemoglobin subunit alpha-4</fullName>
    </recommendedName>
    <alternativeName>
        <fullName>Alpha-4-globin</fullName>
    </alternativeName>
    <alternativeName>
        <fullName>Hemoglobin alpha-4 chain</fullName>
    </alternativeName>
</protein>
<gene>
    <name type="primary">hba4</name>
</gene>
<keyword id="KW-0002">3D-structure</keyword>
<keyword id="KW-0007">Acetylation</keyword>
<keyword id="KW-0903">Direct protein sequencing</keyword>
<keyword id="KW-0349">Heme</keyword>
<keyword id="KW-0408">Iron</keyword>
<keyword id="KW-0479">Metal-binding</keyword>
<keyword id="KW-0561">Oxygen transport</keyword>
<keyword id="KW-0813">Transport</keyword>
<dbReference type="PIR" id="S03995">
    <property type="entry name" value="S03995"/>
</dbReference>
<dbReference type="PDB" id="2R1H">
    <property type="method" value="X-ray"/>
    <property type="resolution" value="1.90 A"/>
    <property type="chains" value="A/C=1-142"/>
</dbReference>
<dbReference type="PDB" id="3BOM">
    <property type="method" value="X-ray"/>
    <property type="resolution" value="1.35 A"/>
    <property type="chains" value="A/C=1-142"/>
</dbReference>
<dbReference type="PDBsum" id="2R1H"/>
<dbReference type="PDBsum" id="3BOM"/>
<dbReference type="SMR" id="P14527"/>
<dbReference type="iPTMnet" id="P14527"/>
<dbReference type="EvolutionaryTrace" id="P14527"/>
<dbReference type="Proteomes" id="UP000694395">
    <property type="component" value="Unplaced"/>
</dbReference>
<dbReference type="GO" id="GO:0072562">
    <property type="term" value="C:blood microparticle"/>
    <property type="evidence" value="ECO:0007669"/>
    <property type="project" value="TreeGrafter"/>
</dbReference>
<dbReference type="GO" id="GO:0031838">
    <property type="term" value="C:haptoglobin-hemoglobin complex"/>
    <property type="evidence" value="ECO:0007669"/>
    <property type="project" value="TreeGrafter"/>
</dbReference>
<dbReference type="GO" id="GO:0005833">
    <property type="term" value="C:hemoglobin complex"/>
    <property type="evidence" value="ECO:0007669"/>
    <property type="project" value="InterPro"/>
</dbReference>
<dbReference type="GO" id="GO:0031720">
    <property type="term" value="F:haptoglobin binding"/>
    <property type="evidence" value="ECO:0007669"/>
    <property type="project" value="TreeGrafter"/>
</dbReference>
<dbReference type="GO" id="GO:0020037">
    <property type="term" value="F:heme binding"/>
    <property type="evidence" value="ECO:0007669"/>
    <property type="project" value="InterPro"/>
</dbReference>
<dbReference type="GO" id="GO:0046872">
    <property type="term" value="F:metal ion binding"/>
    <property type="evidence" value="ECO:0007669"/>
    <property type="project" value="UniProtKB-KW"/>
</dbReference>
<dbReference type="GO" id="GO:0043177">
    <property type="term" value="F:organic acid binding"/>
    <property type="evidence" value="ECO:0007669"/>
    <property type="project" value="TreeGrafter"/>
</dbReference>
<dbReference type="GO" id="GO:0019825">
    <property type="term" value="F:oxygen binding"/>
    <property type="evidence" value="ECO:0007669"/>
    <property type="project" value="InterPro"/>
</dbReference>
<dbReference type="GO" id="GO:0005344">
    <property type="term" value="F:oxygen carrier activity"/>
    <property type="evidence" value="ECO:0007669"/>
    <property type="project" value="UniProtKB-KW"/>
</dbReference>
<dbReference type="GO" id="GO:0004601">
    <property type="term" value="F:peroxidase activity"/>
    <property type="evidence" value="ECO:0007669"/>
    <property type="project" value="TreeGrafter"/>
</dbReference>
<dbReference type="GO" id="GO:0042744">
    <property type="term" value="P:hydrogen peroxide catabolic process"/>
    <property type="evidence" value="ECO:0007669"/>
    <property type="project" value="TreeGrafter"/>
</dbReference>
<dbReference type="CDD" id="cd08927">
    <property type="entry name" value="Hb-alpha-like"/>
    <property type="match status" value="1"/>
</dbReference>
<dbReference type="FunFam" id="1.10.490.10:FF:000002">
    <property type="entry name" value="Hemoglobin subunit alpha"/>
    <property type="match status" value="1"/>
</dbReference>
<dbReference type="Gene3D" id="1.10.490.10">
    <property type="entry name" value="Globins"/>
    <property type="match status" value="1"/>
</dbReference>
<dbReference type="InterPro" id="IPR000971">
    <property type="entry name" value="Globin"/>
</dbReference>
<dbReference type="InterPro" id="IPR009050">
    <property type="entry name" value="Globin-like_sf"/>
</dbReference>
<dbReference type="InterPro" id="IPR012292">
    <property type="entry name" value="Globin/Proto"/>
</dbReference>
<dbReference type="InterPro" id="IPR002338">
    <property type="entry name" value="Hemoglobin_a-typ"/>
</dbReference>
<dbReference type="InterPro" id="IPR050056">
    <property type="entry name" value="Hemoglobin_oxygen_transport"/>
</dbReference>
<dbReference type="PANTHER" id="PTHR11442:SF93">
    <property type="entry name" value="ALPHA GLOBIN-LIKE-RELATED"/>
    <property type="match status" value="1"/>
</dbReference>
<dbReference type="PANTHER" id="PTHR11442">
    <property type="entry name" value="HEMOGLOBIN FAMILY MEMBER"/>
    <property type="match status" value="1"/>
</dbReference>
<dbReference type="Pfam" id="PF00042">
    <property type="entry name" value="Globin"/>
    <property type="match status" value="1"/>
</dbReference>
<dbReference type="PRINTS" id="PR00612">
    <property type="entry name" value="ALPHAHAEM"/>
</dbReference>
<dbReference type="SUPFAM" id="SSF46458">
    <property type="entry name" value="Globin-like"/>
    <property type="match status" value="1"/>
</dbReference>
<dbReference type="PROSITE" id="PS01033">
    <property type="entry name" value="GLOBIN"/>
    <property type="match status" value="1"/>
</dbReference>
<proteinExistence type="evidence at protein level"/>
<reference key="1">
    <citation type="journal article" date="1989" name="Biochim. Biophys. Acta">
        <title>Amino acid sequence of alpha-chain of hemoglobin IV from trout (Salmo irideus).</title>
        <authorList>
            <person name="Petruzzelli R."/>
            <person name="Barra D."/>
            <person name="Sensi L."/>
            <person name="Bossa F."/>
            <person name="Brunori M."/>
        </authorList>
    </citation>
    <scope>PROTEIN SEQUENCE</scope>
    <scope>ACETYLATION AT SER-1</scope>
</reference>
<organism>
    <name type="scientific">Oncorhynchus mykiss</name>
    <name type="common">Rainbow trout</name>
    <name type="synonym">Salmo gairdneri</name>
    <dbReference type="NCBI Taxonomy" id="8022"/>
    <lineage>
        <taxon>Eukaryota</taxon>
        <taxon>Metazoa</taxon>
        <taxon>Chordata</taxon>
        <taxon>Craniata</taxon>
        <taxon>Vertebrata</taxon>
        <taxon>Euteleostomi</taxon>
        <taxon>Actinopterygii</taxon>
        <taxon>Neopterygii</taxon>
        <taxon>Teleostei</taxon>
        <taxon>Protacanthopterygii</taxon>
        <taxon>Salmoniformes</taxon>
        <taxon>Salmonidae</taxon>
        <taxon>Salmoninae</taxon>
        <taxon>Oncorhynchus</taxon>
    </lineage>
</organism>
<accession>P14527</accession>
<evidence type="ECO:0000255" key="1">
    <source>
        <dbReference type="PROSITE-ProRule" id="PRU00238"/>
    </source>
</evidence>
<evidence type="ECO:0000269" key="2">
    <source>
    </source>
</evidence>
<evidence type="ECO:0007829" key="3">
    <source>
        <dbReference type="PDB" id="3BOM"/>
    </source>
</evidence>